<reference key="1">
    <citation type="journal article" date="2010" name="PLoS ONE">
        <title>The complete multipartite genome sequence of Cupriavidus necator JMP134, a versatile pollutant degrader.</title>
        <authorList>
            <person name="Lykidis A."/>
            <person name="Perez-Pantoja D."/>
            <person name="Ledger T."/>
            <person name="Mavromatis K."/>
            <person name="Anderson I.J."/>
            <person name="Ivanova N.N."/>
            <person name="Hooper S.D."/>
            <person name="Lapidus A."/>
            <person name="Lucas S."/>
            <person name="Gonzalez B."/>
            <person name="Kyrpides N.C."/>
        </authorList>
    </citation>
    <scope>NUCLEOTIDE SEQUENCE [LARGE SCALE GENOMIC DNA]</scope>
    <source>
        <strain>JMP134 / LMG 1197</strain>
    </source>
</reference>
<evidence type="ECO:0000255" key="1">
    <source>
        <dbReference type="HAMAP-Rule" id="MF_01343"/>
    </source>
</evidence>
<evidence type="ECO:0000305" key="2"/>
<protein>
    <recommendedName>
        <fullName evidence="1">Small ribosomal subunit protein uS15</fullName>
    </recommendedName>
    <alternativeName>
        <fullName evidence="2">30S ribosomal protein S15</fullName>
    </alternativeName>
</protein>
<comment type="function">
    <text evidence="1">One of the primary rRNA binding proteins, it binds directly to 16S rRNA where it helps nucleate assembly of the platform of the 30S subunit by binding and bridging several RNA helices of the 16S rRNA.</text>
</comment>
<comment type="function">
    <text evidence="1">Forms an intersubunit bridge (bridge B4) with the 23S rRNA of the 50S subunit in the ribosome.</text>
</comment>
<comment type="subunit">
    <text evidence="1">Part of the 30S ribosomal subunit. Forms a bridge to the 50S subunit in the 70S ribosome, contacting the 23S rRNA.</text>
</comment>
<comment type="similarity">
    <text evidence="1">Belongs to the universal ribosomal protein uS15 family.</text>
</comment>
<dbReference type="EMBL" id="CP000090">
    <property type="protein sequence ID" value="AAZ60335.1"/>
    <property type="molecule type" value="Genomic_DNA"/>
</dbReference>
<dbReference type="SMR" id="Q473U8"/>
<dbReference type="STRING" id="264198.Reut_A0956"/>
<dbReference type="KEGG" id="reu:Reut_A0956"/>
<dbReference type="eggNOG" id="COG0184">
    <property type="taxonomic scope" value="Bacteria"/>
</dbReference>
<dbReference type="HOGENOM" id="CLU_148518_0_0_4"/>
<dbReference type="OrthoDB" id="9799262at2"/>
<dbReference type="GO" id="GO:0022627">
    <property type="term" value="C:cytosolic small ribosomal subunit"/>
    <property type="evidence" value="ECO:0007669"/>
    <property type="project" value="TreeGrafter"/>
</dbReference>
<dbReference type="GO" id="GO:0019843">
    <property type="term" value="F:rRNA binding"/>
    <property type="evidence" value="ECO:0007669"/>
    <property type="project" value="UniProtKB-UniRule"/>
</dbReference>
<dbReference type="GO" id="GO:0003735">
    <property type="term" value="F:structural constituent of ribosome"/>
    <property type="evidence" value="ECO:0007669"/>
    <property type="project" value="InterPro"/>
</dbReference>
<dbReference type="GO" id="GO:0006412">
    <property type="term" value="P:translation"/>
    <property type="evidence" value="ECO:0007669"/>
    <property type="project" value="UniProtKB-UniRule"/>
</dbReference>
<dbReference type="CDD" id="cd00353">
    <property type="entry name" value="Ribosomal_S15p_S13e"/>
    <property type="match status" value="1"/>
</dbReference>
<dbReference type="FunFam" id="1.10.287.10:FF:000002">
    <property type="entry name" value="30S ribosomal protein S15"/>
    <property type="match status" value="1"/>
</dbReference>
<dbReference type="Gene3D" id="6.10.250.3130">
    <property type="match status" value="1"/>
</dbReference>
<dbReference type="Gene3D" id="1.10.287.10">
    <property type="entry name" value="S15/NS1, RNA-binding"/>
    <property type="match status" value="1"/>
</dbReference>
<dbReference type="HAMAP" id="MF_01343_B">
    <property type="entry name" value="Ribosomal_uS15_B"/>
    <property type="match status" value="1"/>
</dbReference>
<dbReference type="InterPro" id="IPR000589">
    <property type="entry name" value="Ribosomal_uS15"/>
</dbReference>
<dbReference type="InterPro" id="IPR005290">
    <property type="entry name" value="Ribosomal_uS15_bac-type"/>
</dbReference>
<dbReference type="InterPro" id="IPR009068">
    <property type="entry name" value="uS15_NS1_RNA-bd_sf"/>
</dbReference>
<dbReference type="NCBIfam" id="TIGR00952">
    <property type="entry name" value="S15_bact"/>
    <property type="match status" value="1"/>
</dbReference>
<dbReference type="PANTHER" id="PTHR23321">
    <property type="entry name" value="RIBOSOMAL PROTEIN S15, BACTERIAL AND ORGANELLAR"/>
    <property type="match status" value="1"/>
</dbReference>
<dbReference type="PANTHER" id="PTHR23321:SF26">
    <property type="entry name" value="SMALL RIBOSOMAL SUBUNIT PROTEIN US15M"/>
    <property type="match status" value="1"/>
</dbReference>
<dbReference type="Pfam" id="PF00312">
    <property type="entry name" value="Ribosomal_S15"/>
    <property type="match status" value="1"/>
</dbReference>
<dbReference type="SMART" id="SM01387">
    <property type="entry name" value="Ribosomal_S15"/>
    <property type="match status" value="1"/>
</dbReference>
<dbReference type="SUPFAM" id="SSF47060">
    <property type="entry name" value="S15/NS1 RNA-binding domain"/>
    <property type="match status" value="1"/>
</dbReference>
<dbReference type="PROSITE" id="PS00362">
    <property type="entry name" value="RIBOSOMAL_S15"/>
    <property type="match status" value="1"/>
</dbReference>
<feature type="chain" id="PRO_0000115518" description="Small ribosomal subunit protein uS15">
    <location>
        <begin position="1"/>
        <end position="89"/>
    </location>
</feature>
<gene>
    <name evidence="1" type="primary">rpsO</name>
    <name type="ordered locus">Reut_A0956</name>
</gene>
<organism>
    <name type="scientific">Cupriavidus pinatubonensis (strain JMP 134 / LMG 1197)</name>
    <name type="common">Cupriavidus necator (strain JMP 134)</name>
    <dbReference type="NCBI Taxonomy" id="264198"/>
    <lineage>
        <taxon>Bacteria</taxon>
        <taxon>Pseudomonadati</taxon>
        <taxon>Pseudomonadota</taxon>
        <taxon>Betaproteobacteria</taxon>
        <taxon>Burkholderiales</taxon>
        <taxon>Burkholderiaceae</taxon>
        <taxon>Cupriavidus</taxon>
    </lineage>
</organism>
<proteinExistence type="inferred from homology"/>
<keyword id="KW-0687">Ribonucleoprotein</keyword>
<keyword id="KW-0689">Ribosomal protein</keyword>
<keyword id="KW-0694">RNA-binding</keyword>
<keyword id="KW-0699">rRNA-binding</keyword>
<name>RS15_CUPPJ</name>
<sequence length="89" mass="10303">MAVADINKSEVIKQFARGTNDTGSPEVQVALLTTRINELTPHFKANMKDHHSRRGLLRMVSRRRRLLDYLKSNDADRYRALIEKLGLRK</sequence>
<accession>Q473U8</accession>